<comment type="subcellular location">
    <subcellularLocation>
        <location evidence="3">Secreted</location>
    </subcellularLocation>
</comment>
<comment type="tissue specificity">
    <text evidence="3">Nacreous layer of shell (at protein level). Expressed primarily in the mantle with highest level in the mantle pallium and lower level in the mantle edge.</text>
</comment>
<keyword id="KW-0903">Direct protein sequencing</keyword>
<keyword id="KW-0964">Secreted</keyword>
<keyword id="KW-0732">Signal</keyword>
<protein>
    <recommendedName>
        <fullName>Uncharacterized protein 3</fullName>
    </recommendedName>
    <alternativeName>
        <fullName>Nacre uncharacterized shell protein 3</fullName>
        <shortName>NUSP3</shortName>
    </alternativeName>
</protein>
<evidence type="ECO:0000255" key="1"/>
<evidence type="ECO:0000269" key="2">
    <source>
    </source>
</evidence>
<evidence type="ECO:0000269" key="3">
    <source>
    </source>
</evidence>
<evidence type="ECO:0000305" key="4"/>
<accession>P86965</accession>
<sequence length="98" mass="10198">MKYVALAFVLSLVILQISAQVGAAYIPGMGLGSVGRTGAVAGASAGVGNQGRGAGILRLLSIIMELVKNNQQAQPKQDTFGAQLQSLLKKKMILEMIN</sequence>
<organism>
    <name type="scientific">Pinctada maxima</name>
    <name type="common">Silver-lipped pearl oyster</name>
    <name type="synonym">White-lipped pearl oyster</name>
    <dbReference type="NCBI Taxonomy" id="104660"/>
    <lineage>
        <taxon>Eukaryota</taxon>
        <taxon>Metazoa</taxon>
        <taxon>Spiralia</taxon>
        <taxon>Lophotrochozoa</taxon>
        <taxon>Mollusca</taxon>
        <taxon>Bivalvia</taxon>
        <taxon>Autobranchia</taxon>
        <taxon>Pteriomorphia</taxon>
        <taxon>Pterioida</taxon>
        <taxon>Pterioidea</taxon>
        <taxon>Pteriidae</taxon>
        <taxon>Pinctada</taxon>
    </lineage>
</organism>
<feature type="signal peptide" evidence="1">
    <location>
        <begin position="1"/>
        <end position="23"/>
    </location>
</feature>
<feature type="chain" id="PRO_0000413080" description="Uncharacterized protein 3" evidence="1">
    <location>
        <begin position="24"/>
        <end position="98"/>
    </location>
</feature>
<reference evidence="4" key="1">
    <citation type="journal article" date="2010" name="Mol. Biol. Evol.">
        <title>Parallel evolution of nacre building gene sets in molluscs.</title>
        <authorList>
            <person name="Jackson D.J."/>
            <person name="McDougall C."/>
            <person name="Woodcroft B."/>
            <person name="Moase P."/>
            <person name="Rose R.A."/>
            <person name="Kube M."/>
            <person name="Reinhardt R."/>
            <person name="Rokhsar D.S."/>
            <person name="Montagnani C."/>
            <person name="Joubert C."/>
            <person name="Piquemal D."/>
            <person name="Degnan B.M."/>
        </authorList>
    </citation>
    <scope>NUCLEOTIDE SEQUENCE [MRNA]</scope>
    <scope>IDENTIFICATION</scope>
    <source>
        <tissue evidence="2">Mantle</tissue>
    </source>
</reference>
<reference key="2">
    <citation type="journal article" date="2012" name="Proc. Natl. Acad. Sci. U.S.A.">
        <title>Different secretory repertoires control the biomineralization processes of prism and nacre deposition of the pearl oyster shell.</title>
        <authorList>
            <person name="Marie B."/>
            <person name="Joubert C."/>
            <person name="Tayale A."/>
            <person name="Zanella-Cleon I."/>
            <person name="Belliard C."/>
            <person name="Piquemal D."/>
            <person name="Cochennec-Laureau N."/>
            <person name="Marin F."/>
            <person name="Gueguen Y."/>
            <person name="Montagnani C."/>
        </authorList>
    </citation>
    <scope>PROTEIN SEQUENCE OF 37-52; 59-68 AND 77-89</scope>
    <scope>SUBCELLULAR LOCATION</scope>
    <scope>TISSUE SPECIFICITY</scope>
    <source>
        <tissue>Shell</tissue>
    </source>
</reference>
<dbReference type="EMBL" id="GT282524">
    <property type="status" value="NOT_ANNOTATED_CDS"/>
    <property type="molecule type" value="mRNA"/>
</dbReference>
<dbReference type="SMR" id="P86965"/>
<dbReference type="GO" id="GO:0005576">
    <property type="term" value="C:extracellular region"/>
    <property type="evidence" value="ECO:0007669"/>
    <property type="project" value="UniProtKB-SubCell"/>
</dbReference>
<name>USP3_PINMA</name>
<proteinExistence type="evidence at protein level"/>